<organism>
    <name type="scientific">Drosophila melanogaster</name>
    <name type="common">Fruit fly</name>
    <dbReference type="NCBI Taxonomy" id="7227"/>
    <lineage>
        <taxon>Eukaryota</taxon>
        <taxon>Metazoa</taxon>
        <taxon>Ecdysozoa</taxon>
        <taxon>Arthropoda</taxon>
        <taxon>Hexapoda</taxon>
        <taxon>Insecta</taxon>
        <taxon>Pterygota</taxon>
        <taxon>Neoptera</taxon>
        <taxon>Endopterygota</taxon>
        <taxon>Diptera</taxon>
        <taxon>Brachycera</taxon>
        <taxon>Muscomorpha</taxon>
        <taxon>Ephydroidea</taxon>
        <taxon>Drosophilidae</taxon>
        <taxon>Drosophila</taxon>
        <taxon>Sophophora</taxon>
    </lineage>
</organism>
<proteinExistence type="evidence at protein level"/>
<feature type="chain" id="PRO_0000312130" description="Cytokine-like nuclear factor N-PAC">
    <location>
        <begin position="1"/>
        <end position="602"/>
    </location>
</feature>
<feature type="domain" description="PWWP" evidence="2">
    <location>
        <begin position="22"/>
        <end position="81"/>
    </location>
</feature>
<feature type="region of interest" description="Disordered" evidence="3">
    <location>
        <begin position="162"/>
        <end position="262"/>
    </location>
</feature>
<feature type="region of interest" description="Dehydrogenase domain" evidence="1">
    <location>
        <begin position="309"/>
        <end position="602"/>
    </location>
</feature>
<feature type="compositionally biased region" description="Polar residues" evidence="3">
    <location>
        <begin position="176"/>
        <end position="188"/>
    </location>
</feature>
<feature type="compositionally biased region" description="Polar residues" evidence="3">
    <location>
        <begin position="204"/>
        <end position="217"/>
    </location>
</feature>
<feature type="compositionally biased region" description="Polar residues" evidence="3">
    <location>
        <begin position="224"/>
        <end position="233"/>
    </location>
</feature>
<feature type="binding site" evidence="1">
    <location>
        <begin position="319"/>
        <end position="333"/>
    </location>
    <ligand>
        <name>NAD(+)</name>
        <dbReference type="ChEBI" id="CHEBI:57540"/>
    </ligand>
</feature>
<feature type="binding site" evidence="1">
    <location>
        <position position="411"/>
    </location>
    <ligand>
        <name>NAD(+)</name>
        <dbReference type="ChEBI" id="CHEBI:57540"/>
    </ligand>
</feature>
<feature type="binding site" evidence="1">
    <location>
        <position position="554"/>
    </location>
    <ligand>
        <name>NAD(+)</name>
        <dbReference type="ChEBI" id="CHEBI:57540"/>
    </ligand>
</feature>
<feature type="modified residue" description="Phosphoserine" evidence="4">
    <location>
        <position position="8"/>
    </location>
</feature>
<feature type="modified residue" description="Phosphoserine" evidence="4">
    <location>
        <position position="10"/>
    </location>
</feature>
<feature type="modified residue" description="Phosphoserine" evidence="4">
    <location>
        <position position="224"/>
    </location>
</feature>
<feature type="modified residue" description="Phosphoserine" evidence="4">
    <location>
        <position position="228"/>
    </location>
</feature>
<feature type="modified residue" description="Phosphoserine" evidence="4">
    <location>
        <position position="243"/>
    </location>
</feature>
<protein>
    <recommendedName>
        <fullName>Cytokine-like nuclear factor N-PAC</fullName>
        <shortName>NPAC</shortName>
    </recommendedName>
    <alternativeName>
        <fullName>Glyoxylate reductase 1 homolog</fullName>
    </alternativeName>
    <alternativeName>
        <fullName>Nuclear protein NP60 homolog</fullName>
    </alternativeName>
    <alternativeName>
        <fullName evidence="8">Nucleosome-destabilizing factor</fullName>
    </alternativeName>
    <alternativeName>
        <fullName>Putative oxidoreductase GLYR1 homolog</fullName>
    </alternativeName>
</protein>
<keyword id="KW-0158">Chromosome</keyword>
<keyword id="KW-0597">Phosphoprotein</keyword>
<keyword id="KW-1185">Reference proteome</keyword>
<name>GLYR1_DROME</name>
<sequence>MSKNKKLSLSGGDTTEKFIYKPKDLIWAKMKGFTPWPGMIVDPPLDLLSQQRRANTKCVFFFGSRNFAWIEENNIKPFEGPWKEELAKVSKPAAFRHAMTDIEKYIDDPAEVDEQVNKSCGAPNHATEADFDKIRDGLDSEEIVGEEATADGNNGVVAHVVGSPDEGDGLDVEINADSSASPVTSPAVTTKAAGKRTPKAKSVAATSVKSTKGSAKSAQKRRTSAQQSPSGPSNAKRGKRDVSGEALQDADEASSTPTGRRRVETDALLASIAAKRAPNAIALLDRPVVTRPEAQVIDMSSRSNTLADRDIVPSEQTFGFLGLGMMGSTIVKDLIYTGHKVVVWNRTIDKCQPFAEAGAEVKDTPMDVVEAADVIFCCVSDPKGAKDLVFGNCGVLQLKDLNNKAYVEMSTIDPDTSLDIGEGIKQCNGRYLEAQIHGSRQEAAEGMLIILAGGDRSVFEECHSCFKTIAKNTFFLGNIGNACKVNLILQTILGVSLVGLAEALALADRFSISLNDIIDIFDLTSMKSPMLLAKGKEMAKGDFNPQQPLSHMQRDLRLVLNMAENLDQSMPVTSITNEVFKHTKRLGYSEHDSSAVFVRSRF</sequence>
<dbReference type="EMBL" id="AE014134">
    <property type="protein sequence ID" value="AAF52846.3"/>
    <property type="molecule type" value="Genomic_DNA"/>
</dbReference>
<dbReference type="EMBL" id="AY069497">
    <property type="protein sequence ID" value="AAL39642.1"/>
    <property type="molecule type" value="mRNA"/>
</dbReference>
<dbReference type="RefSeq" id="NP_001285791.1">
    <property type="nucleotide sequence ID" value="NM_001298862.1"/>
</dbReference>
<dbReference type="RefSeq" id="NP_609336.3">
    <property type="nucleotide sequence ID" value="NM_135492.5"/>
</dbReference>
<dbReference type="SMR" id="Q8T079"/>
<dbReference type="BioGRID" id="72969">
    <property type="interactions" value="7"/>
</dbReference>
<dbReference type="FunCoup" id="Q8T079">
    <property type="interactions" value="2220"/>
</dbReference>
<dbReference type="IntAct" id="Q8T079">
    <property type="interactions" value="62"/>
</dbReference>
<dbReference type="STRING" id="7227.FBpp0292905"/>
<dbReference type="iPTMnet" id="Q8T079"/>
<dbReference type="PaxDb" id="7227-FBpp0292905"/>
<dbReference type="DNASU" id="192507"/>
<dbReference type="EnsemblMetazoa" id="FBtr0079930">
    <property type="protein sequence ID" value="FBpp0079520"/>
    <property type="gene ID" value="FBgn0043456"/>
</dbReference>
<dbReference type="EnsemblMetazoa" id="FBtr0343740">
    <property type="protein sequence ID" value="FBpp0310306"/>
    <property type="gene ID" value="FBgn0043456"/>
</dbReference>
<dbReference type="GeneID" id="192507"/>
<dbReference type="KEGG" id="dme:Dmel_CG4747"/>
<dbReference type="UCSC" id="CG4747-RA">
    <property type="organism name" value="d. melanogaster"/>
</dbReference>
<dbReference type="AGR" id="FB:FBgn0043456"/>
<dbReference type="CTD" id="192507"/>
<dbReference type="FlyBase" id="FBgn0043456">
    <property type="gene designation" value="Ndf"/>
</dbReference>
<dbReference type="VEuPathDB" id="VectorBase:FBgn0043456"/>
<dbReference type="eggNOG" id="KOG0409">
    <property type="taxonomic scope" value="Eukaryota"/>
</dbReference>
<dbReference type="HOGENOM" id="CLU_018075_0_0_1"/>
<dbReference type="InParanoid" id="Q8T079"/>
<dbReference type="OrthoDB" id="21615at2759"/>
<dbReference type="PhylomeDB" id="Q8T079"/>
<dbReference type="SignaLink" id="Q8T079"/>
<dbReference type="BioGRID-ORCS" id="192507">
    <property type="hits" value="0 hits in 1 CRISPR screen"/>
</dbReference>
<dbReference type="GenomeRNAi" id="192507"/>
<dbReference type="PRO" id="PR:Q8T079"/>
<dbReference type="Proteomes" id="UP000000803">
    <property type="component" value="Chromosome 2L"/>
</dbReference>
<dbReference type="Bgee" id="FBgn0043456">
    <property type="expression patterns" value="Expressed in posterior terminal follicle cell in ovary and 266 other cell types or tissues"/>
</dbReference>
<dbReference type="ExpressionAtlas" id="Q8T079">
    <property type="expression patterns" value="baseline and differential"/>
</dbReference>
<dbReference type="GO" id="GO:0000785">
    <property type="term" value="C:chromatin"/>
    <property type="evidence" value="ECO:0000318"/>
    <property type="project" value="GO_Central"/>
</dbReference>
<dbReference type="GO" id="GO:0005705">
    <property type="term" value="C:polytene chromosome interband"/>
    <property type="evidence" value="ECO:0000314"/>
    <property type="project" value="FlyBase"/>
</dbReference>
<dbReference type="GO" id="GO:0003682">
    <property type="term" value="F:chromatin binding"/>
    <property type="evidence" value="ECO:0000314"/>
    <property type="project" value="UniProtKB"/>
</dbReference>
<dbReference type="GO" id="GO:0003677">
    <property type="term" value="F:DNA binding"/>
    <property type="evidence" value="ECO:0000314"/>
    <property type="project" value="UniProtKB"/>
</dbReference>
<dbReference type="GO" id="GO:0051287">
    <property type="term" value="F:NAD binding"/>
    <property type="evidence" value="ECO:0007669"/>
    <property type="project" value="InterPro"/>
</dbReference>
<dbReference type="GO" id="GO:0050661">
    <property type="term" value="F:NADP binding"/>
    <property type="evidence" value="ECO:0007669"/>
    <property type="project" value="InterPro"/>
</dbReference>
<dbReference type="GO" id="GO:0031491">
    <property type="term" value="F:nucleosome binding"/>
    <property type="evidence" value="ECO:0000314"/>
    <property type="project" value="UniProtKB"/>
</dbReference>
<dbReference type="GO" id="GO:0007549">
    <property type="term" value="P:sex-chromosome dosage compensation"/>
    <property type="evidence" value="ECO:0000315"/>
    <property type="project" value="UniProtKB"/>
</dbReference>
<dbReference type="GO" id="GO:0140673">
    <property type="term" value="P:transcription elongation-coupled chromatin remodeling"/>
    <property type="evidence" value="ECO:0000314"/>
    <property type="project" value="UniProtKB"/>
</dbReference>
<dbReference type="CDD" id="cd05836">
    <property type="entry name" value="PWWP_GLYR1"/>
    <property type="match status" value="1"/>
</dbReference>
<dbReference type="FunFam" id="1.10.1040.10:FF:000039">
    <property type="entry name" value="Blast:Putative oxidoreductase GLYR1 homolog"/>
    <property type="match status" value="1"/>
</dbReference>
<dbReference type="FunFam" id="3.40.50.720:FF:000058">
    <property type="entry name" value="Putative oxidoreductase GLYR1 homolog"/>
    <property type="match status" value="1"/>
</dbReference>
<dbReference type="FunFam" id="2.30.30.140:FF:000098">
    <property type="entry name" value="Uncharacterized protein, isoform B"/>
    <property type="match status" value="1"/>
</dbReference>
<dbReference type="Gene3D" id="2.30.30.140">
    <property type="match status" value="1"/>
</dbReference>
<dbReference type="Gene3D" id="1.10.1040.10">
    <property type="entry name" value="N-(1-d-carboxylethyl)-l-norvaline Dehydrogenase, domain 2"/>
    <property type="match status" value="1"/>
</dbReference>
<dbReference type="Gene3D" id="3.40.50.720">
    <property type="entry name" value="NAD(P)-binding Rossmann-like Domain"/>
    <property type="match status" value="1"/>
</dbReference>
<dbReference type="InterPro" id="IPR008927">
    <property type="entry name" value="6-PGluconate_DH-like_C_sf"/>
</dbReference>
<dbReference type="InterPro" id="IPR013328">
    <property type="entry name" value="6PGD_dom2"/>
</dbReference>
<dbReference type="InterPro" id="IPR006115">
    <property type="entry name" value="6PGDH_NADP-bd"/>
</dbReference>
<dbReference type="InterPro" id="IPR035501">
    <property type="entry name" value="GLYR1_PWWP"/>
</dbReference>
<dbReference type="InterPro" id="IPR029154">
    <property type="entry name" value="HIBADH-like_NADP-bd"/>
</dbReference>
<dbReference type="InterPro" id="IPR051265">
    <property type="entry name" value="HIBADH-related_NP60_sf"/>
</dbReference>
<dbReference type="InterPro" id="IPR036291">
    <property type="entry name" value="NAD(P)-bd_dom_sf"/>
</dbReference>
<dbReference type="InterPro" id="IPR000313">
    <property type="entry name" value="PWWP_dom"/>
</dbReference>
<dbReference type="PANTHER" id="PTHR43580:SF2">
    <property type="entry name" value="CYTOKINE-LIKE NUCLEAR FACTOR N-PAC"/>
    <property type="match status" value="1"/>
</dbReference>
<dbReference type="PANTHER" id="PTHR43580">
    <property type="entry name" value="OXIDOREDUCTASE GLYR1-RELATED"/>
    <property type="match status" value="1"/>
</dbReference>
<dbReference type="Pfam" id="PF14833">
    <property type="entry name" value="NAD_binding_11"/>
    <property type="match status" value="1"/>
</dbReference>
<dbReference type="Pfam" id="PF03446">
    <property type="entry name" value="NAD_binding_2"/>
    <property type="match status" value="1"/>
</dbReference>
<dbReference type="Pfam" id="PF00855">
    <property type="entry name" value="PWWP"/>
    <property type="match status" value="1"/>
</dbReference>
<dbReference type="SMART" id="SM00293">
    <property type="entry name" value="PWWP"/>
    <property type="match status" value="1"/>
</dbReference>
<dbReference type="SUPFAM" id="SSF48179">
    <property type="entry name" value="6-phosphogluconate dehydrogenase C-terminal domain-like"/>
    <property type="match status" value="1"/>
</dbReference>
<dbReference type="SUPFAM" id="SSF51735">
    <property type="entry name" value="NAD(P)-binding Rossmann-fold domains"/>
    <property type="match status" value="1"/>
</dbReference>
<dbReference type="SUPFAM" id="SSF63748">
    <property type="entry name" value="Tudor/PWWP/MBT"/>
    <property type="match status" value="1"/>
</dbReference>
<dbReference type="PROSITE" id="PS50812">
    <property type="entry name" value="PWWP"/>
    <property type="match status" value="1"/>
</dbReference>
<gene>
    <name evidence="8" type="primary">Ndf</name>
    <name evidence="8" type="ORF">CG4747</name>
</gene>
<accession>Q8T079</accession>
<accession>Q9VL51</accession>
<reference key="1">
    <citation type="journal article" date="2000" name="Science">
        <title>The genome sequence of Drosophila melanogaster.</title>
        <authorList>
            <person name="Adams M.D."/>
            <person name="Celniker S.E."/>
            <person name="Holt R.A."/>
            <person name="Evans C.A."/>
            <person name="Gocayne J.D."/>
            <person name="Amanatides P.G."/>
            <person name="Scherer S.E."/>
            <person name="Li P.W."/>
            <person name="Hoskins R.A."/>
            <person name="Galle R.F."/>
            <person name="George R.A."/>
            <person name="Lewis S.E."/>
            <person name="Richards S."/>
            <person name="Ashburner M."/>
            <person name="Henderson S.N."/>
            <person name="Sutton G.G."/>
            <person name="Wortman J.R."/>
            <person name="Yandell M.D."/>
            <person name="Zhang Q."/>
            <person name="Chen L.X."/>
            <person name="Brandon R.C."/>
            <person name="Rogers Y.-H.C."/>
            <person name="Blazej R.G."/>
            <person name="Champe M."/>
            <person name="Pfeiffer B.D."/>
            <person name="Wan K.H."/>
            <person name="Doyle C."/>
            <person name="Baxter E.G."/>
            <person name="Helt G."/>
            <person name="Nelson C.R."/>
            <person name="Miklos G.L.G."/>
            <person name="Abril J.F."/>
            <person name="Agbayani A."/>
            <person name="An H.-J."/>
            <person name="Andrews-Pfannkoch C."/>
            <person name="Baldwin D."/>
            <person name="Ballew R.M."/>
            <person name="Basu A."/>
            <person name="Baxendale J."/>
            <person name="Bayraktaroglu L."/>
            <person name="Beasley E.M."/>
            <person name="Beeson K.Y."/>
            <person name="Benos P.V."/>
            <person name="Berman B.P."/>
            <person name="Bhandari D."/>
            <person name="Bolshakov S."/>
            <person name="Borkova D."/>
            <person name="Botchan M.R."/>
            <person name="Bouck J."/>
            <person name="Brokstein P."/>
            <person name="Brottier P."/>
            <person name="Burtis K.C."/>
            <person name="Busam D.A."/>
            <person name="Butler H."/>
            <person name="Cadieu E."/>
            <person name="Center A."/>
            <person name="Chandra I."/>
            <person name="Cherry J.M."/>
            <person name="Cawley S."/>
            <person name="Dahlke C."/>
            <person name="Davenport L.B."/>
            <person name="Davies P."/>
            <person name="de Pablos B."/>
            <person name="Delcher A."/>
            <person name="Deng Z."/>
            <person name="Mays A.D."/>
            <person name="Dew I."/>
            <person name="Dietz S.M."/>
            <person name="Dodson K."/>
            <person name="Doup L.E."/>
            <person name="Downes M."/>
            <person name="Dugan-Rocha S."/>
            <person name="Dunkov B.C."/>
            <person name="Dunn P."/>
            <person name="Durbin K.J."/>
            <person name="Evangelista C.C."/>
            <person name="Ferraz C."/>
            <person name="Ferriera S."/>
            <person name="Fleischmann W."/>
            <person name="Fosler C."/>
            <person name="Gabrielian A.E."/>
            <person name="Garg N.S."/>
            <person name="Gelbart W.M."/>
            <person name="Glasser K."/>
            <person name="Glodek A."/>
            <person name="Gong F."/>
            <person name="Gorrell J.H."/>
            <person name="Gu Z."/>
            <person name="Guan P."/>
            <person name="Harris M."/>
            <person name="Harris N.L."/>
            <person name="Harvey D.A."/>
            <person name="Heiman T.J."/>
            <person name="Hernandez J.R."/>
            <person name="Houck J."/>
            <person name="Hostin D."/>
            <person name="Houston K.A."/>
            <person name="Howland T.J."/>
            <person name="Wei M.-H."/>
            <person name="Ibegwam C."/>
            <person name="Jalali M."/>
            <person name="Kalush F."/>
            <person name="Karpen G.H."/>
            <person name="Ke Z."/>
            <person name="Kennison J.A."/>
            <person name="Ketchum K.A."/>
            <person name="Kimmel B.E."/>
            <person name="Kodira C.D."/>
            <person name="Kraft C.L."/>
            <person name="Kravitz S."/>
            <person name="Kulp D."/>
            <person name="Lai Z."/>
            <person name="Lasko P."/>
            <person name="Lei Y."/>
            <person name="Levitsky A.A."/>
            <person name="Li J.H."/>
            <person name="Li Z."/>
            <person name="Liang Y."/>
            <person name="Lin X."/>
            <person name="Liu X."/>
            <person name="Mattei B."/>
            <person name="McIntosh T.C."/>
            <person name="McLeod M.P."/>
            <person name="McPherson D."/>
            <person name="Merkulov G."/>
            <person name="Milshina N.V."/>
            <person name="Mobarry C."/>
            <person name="Morris J."/>
            <person name="Moshrefi A."/>
            <person name="Mount S.M."/>
            <person name="Moy M."/>
            <person name="Murphy B."/>
            <person name="Murphy L."/>
            <person name="Muzny D.M."/>
            <person name="Nelson D.L."/>
            <person name="Nelson D.R."/>
            <person name="Nelson K.A."/>
            <person name="Nixon K."/>
            <person name="Nusskern D.R."/>
            <person name="Pacleb J.M."/>
            <person name="Palazzolo M."/>
            <person name="Pittman G.S."/>
            <person name="Pan S."/>
            <person name="Pollard J."/>
            <person name="Puri V."/>
            <person name="Reese M.G."/>
            <person name="Reinert K."/>
            <person name="Remington K."/>
            <person name="Saunders R.D.C."/>
            <person name="Scheeler F."/>
            <person name="Shen H."/>
            <person name="Shue B.C."/>
            <person name="Siden-Kiamos I."/>
            <person name="Simpson M."/>
            <person name="Skupski M.P."/>
            <person name="Smith T.J."/>
            <person name="Spier E."/>
            <person name="Spradling A.C."/>
            <person name="Stapleton M."/>
            <person name="Strong R."/>
            <person name="Sun E."/>
            <person name="Svirskas R."/>
            <person name="Tector C."/>
            <person name="Turner R."/>
            <person name="Venter E."/>
            <person name="Wang A.H."/>
            <person name="Wang X."/>
            <person name="Wang Z.-Y."/>
            <person name="Wassarman D.A."/>
            <person name="Weinstock G.M."/>
            <person name="Weissenbach J."/>
            <person name="Williams S.M."/>
            <person name="Woodage T."/>
            <person name="Worley K.C."/>
            <person name="Wu D."/>
            <person name="Yang S."/>
            <person name="Yao Q.A."/>
            <person name="Ye J."/>
            <person name="Yeh R.-F."/>
            <person name="Zaveri J.S."/>
            <person name="Zhan M."/>
            <person name="Zhang G."/>
            <person name="Zhao Q."/>
            <person name="Zheng L."/>
            <person name="Zheng X.H."/>
            <person name="Zhong F.N."/>
            <person name="Zhong W."/>
            <person name="Zhou X."/>
            <person name="Zhu S.C."/>
            <person name="Zhu X."/>
            <person name="Smith H.O."/>
            <person name="Gibbs R.A."/>
            <person name="Myers E.W."/>
            <person name="Rubin G.M."/>
            <person name="Venter J.C."/>
        </authorList>
    </citation>
    <scope>NUCLEOTIDE SEQUENCE [LARGE SCALE GENOMIC DNA]</scope>
    <source>
        <strain>Berkeley</strain>
    </source>
</reference>
<reference key="2">
    <citation type="journal article" date="2002" name="Genome Biol.">
        <title>Annotation of the Drosophila melanogaster euchromatic genome: a systematic review.</title>
        <authorList>
            <person name="Misra S."/>
            <person name="Crosby M.A."/>
            <person name="Mungall C.J."/>
            <person name="Matthews B.B."/>
            <person name="Campbell K.S."/>
            <person name="Hradecky P."/>
            <person name="Huang Y."/>
            <person name="Kaminker J.S."/>
            <person name="Millburn G.H."/>
            <person name="Prochnik S.E."/>
            <person name="Smith C.D."/>
            <person name="Tupy J.L."/>
            <person name="Whitfield E.J."/>
            <person name="Bayraktaroglu L."/>
            <person name="Berman B.P."/>
            <person name="Bettencourt B.R."/>
            <person name="Celniker S.E."/>
            <person name="de Grey A.D.N.J."/>
            <person name="Drysdale R.A."/>
            <person name="Harris N.L."/>
            <person name="Richter J."/>
            <person name="Russo S."/>
            <person name="Schroeder A.J."/>
            <person name="Shu S.Q."/>
            <person name="Stapleton M."/>
            <person name="Yamada C."/>
            <person name="Ashburner M."/>
            <person name="Gelbart W.M."/>
            <person name="Rubin G.M."/>
            <person name="Lewis S.E."/>
        </authorList>
    </citation>
    <scope>GENOME REANNOTATION</scope>
    <source>
        <strain>Berkeley</strain>
    </source>
</reference>
<reference key="3">
    <citation type="journal article" date="2002" name="Genome Biol.">
        <title>A Drosophila full-length cDNA resource.</title>
        <authorList>
            <person name="Stapleton M."/>
            <person name="Carlson J.W."/>
            <person name="Brokstein P."/>
            <person name="Yu C."/>
            <person name="Champe M."/>
            <person name="George R.A."/>
            <person name="Guarin H."/>
            <person name="Kronmiller B."/>
            <person name="Pacleb J.M."/>
            <person name="Park S."/>
            <person name="Wan K.H."/>
            <person name="Rubin G.M."/>
            <person name="Celniker S.E."/>
        </authorList>
    </citation>
    <scope>NUCLEOTIDE SEQUENCE [LARGE SCALE MRNA]</scope>
    <source>
        <strain>Berkeley</strain>
        <tissue>Embryo</tissue>
    </source>
</reference>
<reference key="4">
    <citation type="journal article" date="2008" name="J. Proteome Res.">
        <title>Phosphoproteome analysis of Drosophila melanogaster embryos.</title>
        <authorList>
            <person name="Zhai B."/>
            <person name="Villen J."/>
            <person name="Beausoleil S.A."/>
            <person name="Mintseris J."/>
            <person name="Gygi S.P."/>
        </authorList>
    </citation>
    <scope>PHOSPHORYLATION [LARGE SCALE ANALYSIS] AT SER-8; SER-10; SER-224; SER-228 AND SER-243</scope>
    <scope>IDENTIFICATION BY MASS SPECTROMETRY</scope>
    <source>
        <tissue>Embryo</tissue>
    </source>
</reference>
<reference key="5">
    <citation type="journal article" date="2013" name="Nat. Struct. Mol. Biol.">
        <title>Chromatin proteins captured by ChIP-mass spectrometry are linked to dosage compensation in Drosophila.</title>
        <authorList>
            <person name="Wang C.I."/>
            <person name="Alekseyenko A.A."/>
            <person name="LeRoy G."/>
            <person name="Elia A.E."/>
            <person name="Gorchakov A.A."/>
            <person name="Britton L.M."/>
            <person name="Elledge S.J."/>
            <person name="Kharchenko P.V."/>
            <person name="Garcia B.A."/>
            <person name="Kuroda M.I."/>
        </authorList>
    </citation>
    <scope>FUNCTION</scope>
    <scope>INTERACTION WITH MSL COMPLEX</scope>
    <scope>SUBCELLULAR LOCATION</scope>
    <scope>DISRUPTION PHENOTYPE</scope>
</reference>
<reference key="6">
    <citation type="journal article" date="2018" name="Genes Dev.">
        <title>NDF, a nucleosome-destabilizing factor that facilitates transcription through nucleosomes.</title>
        <authorList>
            <person name="Fei J."/>
            <person name="Ishii H."/>
            <person name="Hoeksema M.A."/>
            <person name="Meitinger F."/>
            <person name="Kassavetis G.A."/>
            <person name="Glass C.K."/>
            <person name="Ren B."/>
            <person name="Kadonaga J.T."/>
        </authorList>
    </citation>
    <scope>IDENTIFICATION BY MASS SPECTROMETRY</scope>
    <scope>FUNCTION</scope>
    <scope>INTERACTION WITH NUCLEOSOMES</scope>
    <scope>SUBCELLULAR LOCATION</scope>
</reference>
<evidence type="ECO:0000250" key="1">
    <source>
        <dbReference type="UniProtKB" id="Q49A26"/>
    </source>
</evidence>
<evidence type="ECO:0000255" key="2">
    <source>
        <dbReference type="PROSITE-ProRule" id="PRU00162"/>
    </source>
</evidence>
<evidence type="ECO:0000256" key="3">
    <source>
        <dbReference type="SAM" id="MobiDB-lite"/>
    </source>
</evidence>
<evidence type="ECO:0000269" key="4">
    <source>
    </source>
</evidence>
<evidence type="ECO:0000269" key="5">
    <source>
    </source>
</evidence>
<evidence type="ECO:0000269" key="6">
    <source>
    </source>
</evidence>
<evidence type="ECO:0000305" key="7"/>
<evidence type="ECO:0000312" key="8">
    <source>
        <dbReference type="FlyBase" id="FBgn0043456"/>
    </source>
</evidence>
<comment type="function">
    <text evidence="1 5 6">Nucleosome-destabilizing factor that is recruited to genes during transcriptional activation and colocalizes with a subset of trimethylated 'Lys-36' histone H3 (H3K36me3)-enriched regions (PubMed:23295261, PubMed:29759984). Binds DNA (in vitro) (PubMed:29759984). Facilitates Pol II transcription through nucleosomes (PubMed:29759984). Facilitates male-specific lethal (MSL) histone acetyltransferase complex targeting to active genes on the X chromosome (PubMed:23295261). Stimulates the acetylation of 'Lys-56' of nucleosomal histone H3 (H3K56ac) by nej (PubMed:29759984). May have oxidoreductase activity (By similarity).</text>
</comment>
<comment type="subunit">
    <text evidence="5 6">Binds to mononucleosomes (PubMed:29759984). Interacts with male-specific lethal (MSL) histone acetyltransferase complex at least composed of mof, msl-1, msl-2 and msl-3 (PubMed:23295261).</text>
</comment>
<comment type="subcellular location">
    <subcellularLocation>
        <location evidence="5 6">Chromosome</location>
    </subcellularLocation>
    <text evidence="5">Localization to open chromatin depends on H3K36 trimethylation by Set2.</text>
</comment>
<comment type="domain">
    <text evidence="1">The PWWP domain is a H3 reader and strongly binds DNA.</text>
</comment>
<comment type="domain">
    <text evidence="1">In the dehydrogenase domain, the conserved NAD(P)H-binding sites and sequence similarity to plant dehydrogenases suggest that this protein may have oxidoreductase activity. However, since the active site is not conserved, the dehydrogenase domain seems to serve as a catalytically inert oligomerization module.</text>
</comment>
<comment type="disruption phenotype">
    <text evidence="5">RNAi-mediated knockdown results in ectopic MSL-binding sites on autosomes of male larvae.</text>
</comment>
<comment type="similarity">
    <text evidence="7">Belongs to the HIBADH-related family. NP60 subfamily.</text>
</comment>